<keyword id="KW-0963">Cytoplasm</keyword>
<keyword id="KW-1185">Reference proteome</keyword>
<keyword id="KW-0819">tRNA processing</keyword>
<organism>
    <name type="scientific">Oryza sativa subsp. indica</name>
    <name type="common">Rice</name>
    <dbReference type="NCBI Taxonomy" id="39946"/>
    <lineage>
        <taxon>Eukaryota</taxon>
        <taxon>Viridiplantae</taxon>
        <taxon>Streptophyta</taxon>
        <taxon>Embryophyta</taxon>
        <taxon>Tracheophyta</taxon>
        <taxon>Spermatophyta</taxon>
        <taxon>Magnoliopsida</taxon>
        <taxon>Liliopsida</taxon>
        <taxon>Poales</taxon>
        <taxon>Poaceae</taxon>
        <taxon>BOP clade</taxon>
        <taxon>Oryzoideae</taxon>
        <taxon>Oryzeae</taxon>
        <taxon>Oryzinae</taxon>
        <taxon>Oryza</taxon>
        <taxon>Oryza sativa</taxon>
    </lineage>
</organism>
<accession>A2ZM73</accession>
<evidence type="ECO:0000255" key="1">
    <source>
        <dbReference type="HAMAP-Rule" id="MF_03054"/>
    </source>
</evidence>
<gene>
    <name evidence="1" type="primary">CTU2</name>
    <name evidence="1" type="synonym">NCS2</name>
    <name type="ORF">OsI_38929</name>
</gene>
<dbReference type="EMBL" id="CM000137">
    <property type="protein sequence ID" value="EAY83707.1"/>
    <property type="molecule type" value="Genomic_DNA"/>
</dbReference>
<dbReference type="SMR" id="A2ZM73"/>
<dbReference type="STRING" id="39946.A2ZM73"/>
<dbReference type="EnsemblPlants" id="BGIOSGA035918-TA">
    <property type="protein sequence ID" value="BGIOSGA035918-PA"/>
    <property type="gene ID" value="BGIOSGA035918"/>
</dbReference>
<dbReference type="EnsemblPlants" id="OsGoSa_12g0018710.01">
    <property type="protein sequence ID" value="OsGoSa_12g0018710.01"/>
    <property type="gene ID" value="OsGoSa_12g0018710"/>
</dbReference>
<dbReference type="EnsemblPlants" id="OsIR64_12g0018320.01">
    <property type="protein sequence ID" value="OsIR64_12g0018320.01"/>
    <property type="gene ID" value="OsIR64_12g0018320"/>
</dbReference>
<dbReference type="EnsemblPlants" id="OsKYG_12g0018790.01">
    <property type="protein sequence ID" value="OsKYG_12g0018790.01"/>
    <property type="gene ID" value="OsKYG_12g0018790"/>
</dbReference>
<dbReference type="EnsemblPlants" id="OsLaMu_12g0018920.01">
    <property type="protein sequence ID" value="OsLaMu_12g0018920.01"/>
    <property type="gene ID" value="OsLaMu_12g0018920"/>
</dbReference>
<dbReference type="EnsemblPlants" id="OsLima_12g0018550.01">
    <property type="protein sequence ID" value="OsLima_12g0018550.01"/>
    <property type="gene ID" value="OsLima_12g0018550"/>
</dbReference>
<dbReference type="EnsemblPlants" id="OsLiXu_12g0018730.01">
    <property type="protein sequence ID" value="OsLiXu_12g0018730.01"/>
    <property type="gene ID" value="OsLiXu_12g0018730"/>
</dbReference>
<dbReference type="EnsemblPlants" id="OsMH63_12G018870_01">
    <property type="protein sequence ID" value="OsMH63_12G018870_01"/>
    <property type="gene ID" value="OsMH63_12G018870"/>
</dbReference>
<dbReference type="EnsemblPlants" id="OsPr106_12g0018450.01">
    <property type="protein sequence ID" value="OsPr106_12g0018450.01"/>
    <property type="gene ID" value="OsPr106_12g0018450"/>
</dbReference>
<dbReference type="EnsemblPlants" id="OsZS97_12G018480_01">
    <property type="protein sequence ID" value="OsZS97_12G018480_01"/>
    <property type="gene ID" value="OsZS97_12G018480"/>
</dbReference>
<dbReference type="Gramene" id="BGIOSGA035918-TA">
    <property type="protein sequence ID" value="BGIOSGA035918-PA"/>
    <property type="gene ID" value="BGIOSGA035918"/>
</dbReference>
<dbReference type="Gramene" id="OsGoSa_12g0018710.01">
    <property type="protein sequence ID" value="OsGoSa_12g0018710.01"/>
    <property type="gene ID" value="OsGoSa_12g0018710"/>
</dbReference>
<dbReference type="Gramene" id="OsIR64_12g0018320.01">
    <property type="protein sequence ID" value="OsIR64_12g0018320.01"/>
    <property type="gene ID" value="OsIR64_12g0018320"/>
</dbReference>
<dbReference type="Gramene" id="OsKYG_12g0018790.01">
    <property type="protein sequence ID" value="OsKYG_12g0018790.01"/>
    <property type="gene ID" value="OsKYG_12g0018790"/>
</dbReference>
<dbReference type="Gramene" id="OsLaMu_12g0018920.01">
    <property type="protein sequence ID" value="OsLaMu_12g0018920.01"/>
    <property type="gene ID" value="OsLaMu_12g0018920"/>
</dbReference>
<dbReference type="Gramene" id="OsLima_12g0018550.01">
    <property type="protein sequence ID" value="OsLima_12g0018550.01"/>
    <property type="gene ID" value="OsLima_12g0018550"/>
</dbReference>
<dbReference type="Gramene" id="OsLiXu_12g0018730.01">
    <property type="protein sequence ID" value="OsLiXu_12g0018730.01"/>
    <property type="gene ID" value="OsLiXu_12g0018730"/>
</dbReference>
<dbReference type="Gramene" id="OsMH63_12G018870_01">
    <property type="protein sequence ID" value="OsMH63_12G018870_01"/>
    <property type="gene ID" value="OsMH63_12G018870"/>
</dbReference>
<dbReference type="Gramene" id="OsPr106_12g0018450.01">
    <property type="protein sequence ID" value="OsPr106_12g0018450.01"/>
    <property type="gene ID" value="OsPr106_12g0018450"/>
</dbReference>
<dbReference type="Gramene" id="OsZS97_12G018480_01">
    <property type="protein sequence ID" value="OsZS97_12G018480_01"/>
    <property type="gene ID" value="OsZS97_12G018480"/>
</dbReference>
<dbReference type="HOGENOM" id="CLU_048050_0_0_1"/>
<dbReference type="OMA" id="CHACRNI"/>
<dbReference type="OrthoDB" id="25129at2759"/>
<dbReference type="UniPathway" id="UPA00988"/>
<dbReference type="Proteomes" id="UP000007015">
    <property type="component" value="Chromosome 12"/>
</dbReference>
<dbReference type="GO" id="GO:0005829">
    <property type="term" value="C:cytosol"/>
    <property type="evidence" value="ECO:0007669"/>
    <property type="project" value="TreeGrafter"/>
</dbReference>
<dbReference type="GO" id="GO:0016779">
    <property type="term" value="F:nucleotidyltransferase activity"/>
    <property type="evidence" value="ECO:0007669"/>
    <property type="project" value="UniProtKB-UniRule"/>
</dbReference>
<dbReference type="GO" id="GO:0016783">
    <property type="term" value="F:sulfurtransferase activity"/>
    <property type="evidence" value="ECO:0007669"/>
    <property type="project" value="TreeGrafter"/>
</dbReference>
<dbReference type="GO" id="GO:0000049">
    <property type="term" value="F:tRNA binding"/>
    <property type="evidence" value="ECO:0007669"/>
    <property type="project" value="InterPro"/>
</dbReference>
<dbReference type="GO" id="GO:0032447">
    <property type="term" value="P:protein urmylation"/>
    <property type="evidence" value="ECO:0007669"/>
    <property type="project" value="UniProtKB-UniRule"/>
</dbReference>
<dbReference type="GO" id="GO:0002143">
    <property type="term" value="P:tRNA wobble position uridine thiolation"/>
    <property type="evidence" value="ECO:0007669"/>
    <property type="project" value="TreeGrafter"/>
</dbReference>
<dbReference type="FunFam" id="3.40.50.620:FF:000199">
    <property type="entry name" value="Cytoplasmic tRNA 2-thiolation protein 2"/>
    <property type="match status" value="1"/>
</dbReference>
<dbReference type="Gene3D" id="3.40.50.620">
    <property type="entry name" value="HUPs"/>
    <property type="match status" value="1"/>
</dbReference>
<dbReference type="HAMAP" id="MF_03054">
    <property type="entry name" value="CTU2"/>
    <property type="match status" value="1"/>
</dbReference>
<dbReference type="InterPro" id="IPR019407">
    <property type="entry name" value="CTU2"/>
</dbReference>
<dbReference type="InterPro" id="IPR014729">
    <property type="entry name" value="Rossmann-like_a/b/a_fold"/>
</dbReference>
<dbReference type="PANTHER" id="PTHR20882">
    <property type="entry name" value="CYTOPLASMIC TRNA 2-THIOLATION PROTEIN 2"/>
    <property type="match status" value="1"/>
</dbReference>
<dbReference type="PANTHER" id="PTHR20882:SF14">
    <property type="entry name" value="CYTOPLASMIC TRNA 2-THIOLATION PROTEIN 2"/>
    <property type="match status" value="1"/>
</dbReference>
<dbReference type="SUPFAM" id="SSF52402">
    <property type="entry name" value="Adenine nucleotide alpha hydrolases-like"/>
    <property type="match status" value="1"/>
</dbReference>
<protein>
    <recommendedName>
        <fullName evidence="1">Cytoplasmic tRNA 2-thiolation protein 2</fullName>
    </recommendedName>
</protein>
<comment type="function">
    <text evidence="1">Plays a central role in 2-thiolation of mcm(5)S(2)U at tRNA wobble positions of tRNA(Lys), tRNA(Glu) and tRNA(Gln). May act by forming a heterodimer with NCS6/CTU1 that ligates sulfur from thiocarboxylated URM1 onto the uridine of tRNAs at wobble position.</text>
</comment>
<comment type="pathway">
    <text evidence="1">tRNA modification; 5-methoxycarbonylmethyl-2-thiouridine-tRNA biosynthesis.</text>
</comment>
<comment type="subcellular location">
    <subcellularLocation>
        <location evidence="1">Cytoplasm</location>
    </subcellularLocation>
</comment>
<comment type="similarity">
    <text evidence="1">Belongs to the CTU2/NCS2 family.</text>
</comment>
<feature type="chain" id="PRO_0000369283" description="Cytoplasmic tRNA 2-thiolation protein 2">
    <location>
        <begin position="1"/>
        <end position="464"/>
    </location>
</feature>
<sequence>MAAAAASSCGGAGCGPHCSSSASAAAVEDAAAAAAEKVGRLSLSRECGKCGGGAAAVAVAGGLGLCGECFRANLLGKFKLAVTSNAMVRPTDSVLLAFSGGPASRVALQFIHEMRCKAIESWDVSNSQALPVFGVGVAFVDESVLCSKPRDEIEMAIEDIRSIVSSLSTGVKAMHIVRLEDVFSTESEDGERRLREAVDMIGDDTGREDFLRCLRMLSLQKIAMENGYAKIMLGSCASAIACHVLSATVKGQGYSLPADVQYVDTRWEIPVVLPLRDCLAQELTLLCELDSLKTQQHLDRPSNGINSLVASFIKRLREENPSREHTIVRTAQKLKPFSFNKFSADGYHDFLPSRLRPKFQKVDSDESTFSEILCLMCGSPFSESELQNLESTKHKAQKKIDLYTAHCCQSCYFQILPAGENLNEHFFSLLPKLWTGKMDTISDSHSLLRDQIEEYLLEENDDGN</sequence>
<proteinExistence type="inferred from homology"/>
<name>CTU2_ORYSI</name>
<reference key="1">
    <citation type="journal article" date="2005" name="PLoS Biol.">
        <title>The genomes of Oryza sativa: a history of duplications.</title>
        <authorList>
            <person name="Yu J."/>
            <person name="Wang J."/>
            <person name="Lin W."/>
            <person name="Li S."/>
            <person name="Li H."/>
            <person name="Zhou J."/>
            <person name="Ni P."/>
            <person name="Dong W."/>
            <person name="Hu S."/>
            <person name="Zeng C."/>
            <person name="Zhang J."/>
            <person name="Zhang Y."/>
            <person name="Li R."/>
            <person name="Xu Z."/>
            <person name="Li S."/>
            <person name="Li X."/>
            <person name="Zheng H."/>
            <person name="Cong L."/>
            <person name="Lin L."/>
            <person name="Yin J."/>
            <person name="Geng J."/>
            <person name="Li G."/>
            <person name="Shi J."/>
            <person name="Liu J."/>
            <person name="Lv H."/>
            <person name="Li J."/>
            <person name="Wang J."/>
            <person name="Deng Y."/>
            <person name="Ran L."/>
            <person name="Shi X."/>
            <person name="Wang X."/>
            <person name="Wu Q."/>
            <person name="Li C."/>
            <person name="Ren X."/>
            <person name="Wang J."/>
            <person name="Wang X."/>
            <person name="Li D."/>
            <person name="Liu D."/>
            <person name="Zhang X."/>
            <person name="Ji Z."/>
            <person name="Zhao W."/>
            <person name="Sun Y."/>
            <person name="Zhang Z."/>
            <person name="Bao J."/>
            <person name="Han Y."/>
            <person name="Dong L."/>
            <person name="Ji J."/>
            <person name="Chen P."/>
            <person name="Wu S."/>
            <person name="Liu J."/>
            <person name="Xiao Y."/>
            <person name="Bu D."/>
            <person name="Tan J."/>
            <person name="Yang L."/>
            <person name="Ye C."/>
            <person name="Zhang J."/>
            <person name="Xu J."/>
            <person name="Zhou Y."/>
            <person name="Yu Y."/>
            <person name="Zhang B."/>
            <person name="Zhuang S."/>
            <person name="Wei H."/>
            <person name="Liu B."/>
            <person name="Lei M."/>
            <person name="Yu H."/>
            <person name="Li Y."/>
            <person name="Xu H."/>
            <person name="Wei S."/>
            <person name="He X."/>
            <person name="Fang L."/>
            <person name="Zhang Z."/>
            <person name="Zhang Y."/>
            <person name="Huang X."/>
            <person name="Su Z."/>
            <person name="Tong W."/>
            <person name="Li J."/>
            <person name="Tong Z."/>
            <person name="Li S."/>
            <person name="Ye J."/>
            <person name="Wang L."/>
            <person name="Fang L."/>
            <person name="Lei T."/>
            <person name="Chen C.-S."/>
            <person name="Chen H.-C."/>
            <person name="Xu Z."/>
            <person name="Li H."/>
            <person name="Huang H."/>
            <person name="Zhang F."/>
            <person name="Xu H."/>
            <person name="Li N."/>
            <person name="Zhao C."/>
            <person name="Li S."/>
            <person name="Dong L."/>
            <person name="Huang Y."/>
            <person name="Li L."/>
            <person name="Xi Y."/>
            <person name="Qi Q."/>
            <person name="Li W."/>
            <person name="Zhang B."/>
            <person name="Hu W."/>
            <person name="Zhang Y."/>
            <person name="Tian X."/>
            <person name="Jiao Y."/>
            <person name="Liang X."/>
            <person name="Jin J."/>
            <person name="Gao L."/>
            <person name="Zheng W."/>
            <person name="Hao B."/>
            <person name="Liu S.-M."/>
            <person name="Wang W."/>
            <person name="Yuan L."/>
            <person name="Cao M."/>
            <person name="McDermott J."/>
            <person name="Samudrala R."/>
            <person name="Wang J."/>
            <person name="Wong G.K.-S."/>
            <person name="Yang H."/>
        </authorList>
    </citation>
    <scope>NUCLEOTIDE SEQUENCE [LARGE SCALE GENOMIC DNA]</scope>
    <source>
        <strain>cv. 93-11</strain>
    </source>
</reference>